<protein>
    <recommendedName>
        <fullName>Gap junction beta-2 protein</fullName>
    </recommendedName>
    <alternativeName>
        <fullName>Connexin-26</fullName>
        <shortName>Cx26</shortName>
    </alternativeName>
</protein>
<organism>
    <name type="scientific">Hylobates lar</name>
    <name type="common">Lar gibbon</name>
    <name type="synonym">White-handed gibbon</name>
    <dbReference type="NCBI Taxonomy" id="9580"/>
    <lineage>
        <taxon>Eukaryota</taxon>
        <taxon>Metazoa</taxon>
        <taxon>Chordata</taxon>
        <taxon>Craniata</taxon>
        <taxon>Vertebrata</taxon>
        <taxon>Euteleostomi</taxon>
        <taxon>Mammalia</taxon>
        <taxon>Eutheria</taxon>
        <taxon>Euarchontoglires</taxon>
        <taxon>Primates</taxon>
        <taxon>Haplorrhini</taxon>
        <taxon>Catarrhini</taxon>
        <taxon>Hylobatidae</taxon>
        <taxon>Hylobates</taxon>
    </lineage>
</organism>
<evidence type="ECO:0000250" key="1">
    <source>
        <dbReference type="UniProtKB" id="P29033"/>
    </source>
</evidence>
<evidence type="ECO:0000250" key="2">
    <source>
        <dbReference type="UniProtKB" id="Q00977"/>
    </source>
</evidence>
<evidence type="ECO:0000305" key="3"/>
<accession>Q7JGL3</accession>
<dbReference type="EMBL" id="AY046583">
    <property type="protein sequence ID" value="AAL03975.1"/>
    <property type="molecule type" value="Genomic_DNA"/>
</dbReference>
<dbReference type="SMR" id="Q7JGL3"/>
<dbReference type="GO" id="GO:0005922">
    <property type="term" value="C:connexin complex"/>
    <property type="evidence" value="ECO:0000250"/>
    <property type="project" value="UniProtKB"/>
</dbReference>
<dbReference type="GO" id="GO:0005886">
    <property type="term" value="C:plasma membrane"/>
    <property type="evidence" value="ECO:0000250"/>
    <property type="project" value="UniProtKB"/>
</dbReference>
<dbReference type="GO" id="GO:0005509">
    <property type="term" value="F:calcium ion binding"/>
    <property type="evidence" value="ECO:0000250"/>
    <property type="project" value="UniProtKB"/>
</dbReference>
<dbReference type="GO" id="GO:0005243">
    <property type="term" value="F:gap junction channel activity"/>
    <property type="evidence" value="ECO:0000250"/>
    <property type="project" value="UniProtKB"/>
</dbReference>
<dbReference type="GO" id="GO:0007267">
    <property type="term" value="P:cell-cell signaling"/>
    <property type="evidence" value="ECO:0000250"/>
    <property type="project" value="UniProtKB"/>
</dbReference>
<dbReference type="GO" id="GO:1990349">
    <property type="term" value="P:gap junction-mediated intercellular transport"/>
    <property type="evidence" value="ECO:0000250"/>
    <property type="project" value="UniProtKB"/>
</dbReference>
<dbReference type="GO" id="GO:0007605">
    <property type="term" value="P:sensory perception of sound"/>
    <property type="evidence" value="ECO:0007669"/>
    <property type="project" value="UniProtKB-KW"/>
</dbReference>
<dbReference type="FunFam" id="1.20.1440.80:FF:000001">
    <property type="entry name" value="Gap junction alpha-1"/>
    <property type="match status" value="1"/>
</dbReference>
<dbReference type="Gene3D" id="1.20.1440.80">
    <property type="entry name" value="Gap junction channel protein cysteine-rich domain"/>
    <property type="match status" value="1"/>
</dbReference>
<dbReference type="InterPro" id="IPR000500">
    <property type="entry name" value="Connexin"/>
</dbReference>
<dbReference type="InterPro" id="IPR002268">
    <property type="entry name" value="Connexin26"/>
</dbReference>
<dbReference type="InterPro" id="IPR019570">
    <property type="entry name" value="Connexin_CCC"/>
</dbReference>
<dbReference type="InterPro" id="IPR017990">
    <property type="entry name" value="Connexin_CS"/>
</dbReference>
<dbReference type="InterPro" id="IPR013092">
    <property type="entry name" value="Connexin_N"/>
</dbReference>
<dbReference type="InterPro" id="IPR038359">
    <property type="entry name" value="Connexin_N_sf"/>
</dbReference>
<dbReference type="PANTHER" id="PTHR11984">
    <property type="entry name" value="CONNEXIN"/>
    <property type="match status" value="1"/>
</dbReference>
<dbReference type="PANTHER" id="PTHR11984:SF46">
    <property type="entry name" value="GAP JUNCTION BETA-2 PROTEIN"/>
    <property type="match status" value="1"/>
</dbReference>
<dbReference type="Pfam" id="PF00029">
    <property type="entry name" value="Connexin"/>
    <property type="match status" value="1"/>
</dbReference>
<dbReference type="PRINTS" id="PR00206">
    <property type="entry name" value="CONNEXIN"/>
</dbReference>
<dbReference type="PRINTS" id="PR01139">
    <property type="entry name" value="CONNEXINB2"/>
</dbReference>
<dbReference type="SMART" id="SM00037">
    <property type="entry name" value="CNX"/>
    <property type="match status" value="1"/>
</dbReference>
<dbReference type="SMART" id="SM01089">
    <property type="entry name" value="Connexin_CCC"/>
    <property type="match status" value="1"/>
</dbReference>
<dbReference type="PROSITE" id="PS00407">
    <property type="entry name" value="CONNEXINS_1"/>
    <property type="match status" value="1"/>
</dbReference>
<dbReference type="PROSITE" id="PS00408">
    <property type="entry name" value="CONNEXINS_2"/>
    <property type="match status" value="1"/>
</dbReference>
<gene>
    <name type="primary">GJB2</name>
</gene>
<comment type="function">
    <text evidence="1">Structural component of gap junctions. Gap junctions are dodecameric channels that connect the cytoplasm of adjoining cells. They are formed by the docking of two hexameric hemichannels, one from each cell membrane. Small molecules and ions diffuse from one cell to a neighboring cell via the central pore.</text>
</comment>
<comment type="subunit">
    <text evidence="1 2">A hemichannel or connexon is composed of a hexamer of connexins. A functional gap junction is formed by the apposition of two hemichannels (By similarity). Forms heteromeric channels with GJB4. Interacts with CNST (By similarity).</text>
</comment>
<comment type="subcellular location">
    <subcellularLocation>
        <location evidence="2">Cell membrane</location>
        <topology evidence="1">Multi-pass membrane protein</topology>
    </subcellularLocation>
    <subcellularLocation>
        <location evidence="2">Cell junction</location>
        <location evidence="2">Gap junction</location>
    </subcellularLocation>
    <text evidence="2">Colocalizes with GJB4 at gap junction plaques in the cochlea.</text>
</comment>
<comment type="similarity">
    <text evidence="3">Belongs to the connexin family. Beta-type (group I) subfamily.</text>
</comment>
<name>CXB2_HYLLA</name>
<reference key="1">
    <citation type="submission" date="2001-07" db="EMBL/GenBank/DDBJ databases">
        <title>Sequence comparison of primate connexin 26 (GJB2) genes.</title>
        <authorList>
            <person name="Orten D.J."/>
            <person name="Bizzarri-Kriener C."/>
            <person name="Askew J.W."/>
            <person name="Li J.-L."/>
            <person name="Louis E."/>
            <person name="Kelley P.M."/>
            <person name="Kimberling W.J."/>
        </authorList>
    </citation>
    <scope>NUCLEOTIDE SEQUENCE [GENOMIC DNA]</scope>
</reference>
<keyword id="KW-0106">Calcium</keyword>
<keyword id="KW-0965">Cell junction</keyword>
<keyword id="KW-1003">Cell membrane</keyword>
<keyword id="KW-1015">Disulfide bond</keyword>
<keyword id="KW-0303">Gap junction</keyword>
<keyword id="KW-1009">Hearing</keyword>
<keyword id="KW-0472">Membrane</keyword>
<keyword id="KW-0479">Metal-binding</keyword>
<keyword id="KW-0812">Transmembrane</keyword>
<keyword id="KW-1133">Transmembrane helix</keyword>
<proteinExistence type="inferred from homology"/>
<sequence>MDWGTLQTILGGVNKHSTSIGKIWLTVLFIFRIMILVVAAKEVWGDEQADFVCNTLQPGCKNVCYDHYFPISHIRLWALQLIFVSTPALLVAMHVAYRRHEKKRKFIKGEIKSEFKDIEEIKTQKVRIEGSLWWTYTSSIFFRVIFEAAFMYVFYVMYDGFSMQRLVKCNAWPCPNTVDCFVSRPTEKTVFTVFMIAVSGICILLNVTELCYLLIRYCSGKSKKPV</sequence>
<feature type="chain" id="PRO_0000057856" description="Gap junction beta-2 protein">
    <location>
        <begin position="1"/>
        <end position="226"/>
    </location>
</feature>
<feature type="intramembrane region" evidence="1">
    <location>
        <begin position="2"/>
        <end position="13"/>
    </location>
</feature>
<feature type="topological domain" description="Cytoplasmic" evidence="3">
    <location>
        <begin position="14"/>
        <end position="20"/>
    </location>
</feature>
<feature type="transmembrane region" description="Helical" evidence="1">
    <location>
        <begin position="21"/>
        <end position="40"/>
    </location>
</feature>
<feature type="topological domain" description="Extracellular" evidence="3">
    <location>
        <begin position="41"/>
        <end position="73"/>
    </location>
</feature>
<feature type="transmembrane region" description="Helical" evidence="1">
    <location>
        <begin position="74"/>
        <end position="94"/>
    </location>
</feature>
<feature type="topological domain" description="Cytoplasmic" evidence="3">
    <location>
        <begin position="95"/>
        <end position="135"/>
    </location>
</feature>
<feature type="transmembrane region" description="Helical" evidence="1">
    <location>
        <begin position="136"/>
        <end position="156"/>
    </location>
</feature>
<feature type="topological domain" description="Extracellular" evidence="3">
    <location>
        <begin position="157"/>
        <end position="189"/>
    </location>
</feature>
<feature type="transmembrane region" description="Helical" evidence="1">
    <location>
        <begin position="190"/>
        <end position="210"/>
    </location>
</feature>
<feature type="topological domain" description="Cytoplasmic" evidence="3">
    <location>
        <begin position="211"/>
        <end position="226"/>
    </location>
</feature>
<feature type="binding site" description="in other chain" evidence="1">
    <location>
        <position position="42"/>
    </location>
    <ligand>
        <name>Ca(2+)</name>
        <dbReference type="ChEBI" id="CHEBI:29108"/>
        <note>ligand shared between two neighboring subunits</note>
    </ligand>
</feature>
<feature type="binding site" evidence="1">
    <location>
        <position position="45"/>
    </location>
    <ligand>
        <name>Ca(2+)</name>
        <dbReference type="ChEBI" id="CHEBI:29108"/>
        <note>ligand shared between two neighboring subunits</note>
    </ligand>
</feature>
<feature type="binding site" evidence="1">
    <location>
        <position position="47"/>
    </location>
    <ligand>
        <name>Ca(2+)</name>
        <dbReference type="ChEBI" id="CHEBI:29108"/>
        <note>ligand shared between two neighboring subunits</note>
    </ligand>
</feature>
<feature type="disulfide bond" evidence="1">
    <location>
        <begin position="53"/>
        <end position="180"/>
    </location>
</feature>
<feature type="disulfide bond" evidence="1">
    <location>
        <begin position="60"/>
        <end position="174"/>
    </location>
</feature>
<feature type="disulfide bond" evidence="1">
    <location>
        <begin position="64"/>
        <end position="169"/>
    </location>
</feature>